<reference key="1">
    <citation type="submission" date="2005-03" db="EMBL/GenBank/DDBJ databases">
        <title>Annotation of the Saccharomyces cerevisiae RM11-1a genome.</title>
        <authorList>
            <consortium name="The Broad Institute Genome Sequencing Platform"/>
            <person name="Birren B.W."/>
            <person name="Lander E.S."/>
            <person name="Galagan J.E."/>
            <person name="Nusbaum C."/>
            <person name="Devon K."/>
            <person name="Cuomo C."/>
            <person name="Jaffe D.B."/>
            <person name="Butler J."/>
            <person name="Alvarez P."/>
            <person name="Gnerre S."/>
            <person name="Grabherr M."/>
            <person name="Kleber M."/>
            <person name="Mauceli E.W."/>
            <person name="Brockman W."/>
            <person name="MacCallum I.A."/>
            <person name="Rounsley S."/>
            <person name="Young S.K."/>
            <person name="LaButti K."/>
            <person name="Pushparaj V."/>
            <person name="DeCaprio D."/>
            <person name="Crawford M."/>
            <person name="Koehrsen M."/>
            <person name="Engels R."/>
            <person name="Montgomery P."/>
            <person name="Pearson M."/>
            <person name="Howarth C."/>
            <person name="Larson L."/>
            <person name="Luoma S."/>
            <person name="White J."/>
            <person name="O'Leary S."/>
            <person name="Kodira C.D."/>
            <person name="Zeng Q."/>
            <person name="Yandava C."/>
            <person name="Alvarado L."/>
            <person name="Pratt S."/>
            <person name="Kruglyak L."/>
        </authorList>
    </citation>
    <scope>NUCLEOTIDE SEQUENCE [LARGE SCALE GENOMIC DNA]</scope>
    <source>
        <strain>RM11-1a</strain>
    </source>
</reference>
<name>ZWINT_YEAS1</name>
<accession>B3LFD9</accession>
<evidence type="ECO:0000250" key="1">
    <source>
        <dbReference type="UniProtKB" id="Q04431"/>
    </source>
</evidence>
<evidence type="ECO:0000255" key="2"/>
<evidence type="ECO:0000305" key="3"/>
<organism>
    <name type="scientific">Saccharomyces cerevisiae (strain RM11-1a)</name>
    <name type="common">Baker's yeast</name>
    <dbReference type="NCBI Taxonomy" id="285006"/>
    <lineage>
        <taxon>Eukaryota</taxon>
        <taxon>Fungi</taxon>
        <taxon>Dikarya</taxon>
        <taxon>Ascomycota</taxon>
        <taxon>Saccharomycotina</taxon>
        <taxon>Saccharomycetes</taxon>
        <taxon>Saccharomycetales</taxon>
        <taxon>Saccharomycetaceae</taxon>
        <taxon>Saccharomyces</taxon>
    </lineage>
</organism>
<dbReference type="EMBL" id="CH408043">
    <property type="protein sequence ID" value="EDV07818.1"/>
    <property type="molecule type" value="Genomic_DNA"/>
</dbReference>
<dbReference type="SMR" id="B3LFD9"/>
<dbReference type="HOGENOM" id="CLU_062083_0_0_1"/>
<dbReference type="OrthoDB" id="37347at4893"/>
<dbReference type="Proteomes" id="UP000008335">
    <property type="component" value="Unassembled WGS sequence"/>
</dbReference>
<dbReference type="GO" id="GO:0000776">
    <property type="term" value="C:kinetochore"/>
    <property type="evidence" value="ECO:0000250"/>
    <property type="project" value="UniProtKB"/>
</dbReference>
<dbReference type="GO" id="GO:0180019">
    <property type="term" value="C:Knl1/Spc105 complex"/>
    <property type="evidence" value="ECO:0000250"/>
    <property type="project" value="UniProtKB"/>
</dbReference>
<dbReference type="GO" id="GO:0005634">
    <property type="term" value="C:nucleus"/>
    <property type="evidence" value="ECO:0007669"/>
    <property type="project" value="UniProtKB-SubCell"/>
</dbReference>
<dbReference type="GO" id="GO:0031619">
    <property type="term" value="P:homologous chromosome orientation in meiotic metaphase I"/>
    <property type="evidence" value="ECO:0000250"/>
    <property type="project" value="UniProtKB"/>
</dbReference>
<dbReference type="GO" id="GO:1905325">
    <property type="term" value="P:regulation of meiosis I spindle assembly checkpoint"/>
    <property type="evidence" value="ECO:0000250"/>
    <property type="project" value="UniProtKB"/>
</dbReference>
<dbReference type="InterPro" id="IPR031361">
    <property type="entry name" value="Kre28"/>
</dbReference>
<dbReference type="Pfam" id="PF17097">
    <property type="entry name" value="Kre28"/>
    <property type="match status" value="1"/>
</dbReference>
<comment type="function">
    <text evidence="1">Acts as a component of the outer kinetochore KNL1 complex that facilitates microtubule-kinetochore interactions and the spindle assembly checkpoint. Kinetochores, consisting of a centromere-associated inner segment and a microtubule-contacting outer segment, play a crucial role in chromosome segregation by mediating the physical connection between centromeric DNA and spindle microtubules. The outer kinetochore is made up of the ten-subunit KMN network, comprising the MIS12, NDC80 and KNL1 complexes, and auxiliary microtubule-associated components; together they connect the outer kinetochore with the inner kinetochore, bind microtubules, and mediate interactions with mitotic checkpoint proteins that delay anaphase until chromosomes are bioriented on the spindle. The KNL1 complex is required for kinetochore binding by the kMAPs (kinetochore-bound microtubule-associated proteins) BIM1, BIK1 and SLK19, and motors CIN8 and KAR3. Required during meiosis.</text>
</comment>
<comment type="subunit">
    <text evidence="1">Component of the KNL1/SPC105 complex composed of SPC105 and KRE28. Part of the ten-subunit outer kinetochore KMN network that includes the KNL1, MIS12 and NDC80 complexes. Interacts with the MIS12 complex subunits MTW1 (via C-terminus) and NSL1 (via C-terminus). Interacts with the NDC80 complex subunits SPC24 and SPC25. Interacts with CNN1 (via N-terminus).</text>
</comment>
<comment type="subcellular location">
    <subcellularLocation>
        <location evidence="1">Nucleus</location>
    </subcellularLocation>
    <subcellularLocation>
        <location evidence="1">Chromosome</location>
        <location evidence="1">Centromere</location>
        <location evidence="1">Kinetochore</location>
    </subcellularLocation>
</comment>
<comment type="similarity">
    <text evidence="3">Belongs to the KRE28 family.</text>
</comment>
<feature type="chain" id="PRO_0000408565" description="Outer kinetochore KNL1 complex subunit KRE28">
    <location>
        <begin position="1"/>
        <end position="385"/>
    </location>
</feature>
<feature type="coiled-coil region" evidence="2">
    <location>
        <begin position="128"/>
        <end position="175"/>
    </location>
</feature>
<feature type="coiled-coil region" evidence="2">
    <location>
        <begin position="229"/>
        <end position="258"/>
    </location>
</feature>
<protein>
    <recommendedName>
        <fullName evidence="3">Outer kinetochore KNL1 complex subunit KRE28</fullName>
    </recommendedName>
    <alternativeName>
        <fullName>Spindle pole body component KRE28</fullName>
    </alternativeName>
</protein>
<gene>
    <name type="primary">KRE28</name>
    <name type="ORF">SCRG_00011</name>
</gene>
<sequence length="385" mass="44674">MDTGSASIKDYETVLTDIEDSIAVSSEEVLNNQELRLKNTLHEITSSILAINEENKFVNPLRNDESLDVEGKEVFVNPKILSAKIKEFNKLMELLKLTYLEQETLDYFFRFTLSSTKPLQLDSEKDPQFVKLNERVNDLKEEISNVQESKIEQIKAEIQETGHNFAEKQDLINELYLEATGDIENCWDSLNELKNLTNKEDKNMMGEKDTILNSSDSDDFVEETYTNWQKLLFLQKQNQRLTKELKEMHEVKNQIIRKGEQSKKEDSGHLMANESELCQSINLLTKFWEKHFLLKGSKTTILNFEIFTQLGKVQFEIKDMQYIIAISLSDLKRPMIKDITILQKAGGNIVTDIEANSKFNNKYRNNTKVQIFEVMDDIISELTNE</sequence>
<proteinExistence type="inferred from homology"/>
<keyword id="KW-0137">Centromere</keyword>
<keyword id="KW-0158">Chromosome</keyword>
<keyword id="KW-0175">Coiled coil</keyword>
<keyword id="KW-0995">Kinetochore</keyword>
<keyword id="KW-0539">Nucleus</keyword>